<comment type="function">
    <text evidence="1">Catalyzes the reversible formation of acyl-phosphate (acyl-PO(4)) from acyl-[acyl-carrier-protein] (acyl-ACP). This enzyme utilizes acyl-ACP as fatty acyl donor, but not acyl-CoA.</text>
</comment>
<comment type="catalytic activity">
    <reaction evidence="1">
        <text>a fatty acyl-[ACP] + phosphate = an acyl phosphate + holo-[ACP]</text>
        <dbReference type="Rhea" id="RHEA:42292"/>
        <dbReference type="Rhea" id="RHEA-COMP:9685"/>
        <dbReference type="Rhea" id="RHEA-COMP:14125"/>
        <dbReference type="ChEBI" id="CHEBI:43474"/>
        <dbReference type="ChEBI" id="CHEBI:59918"/>
        <dbReference type="ChEBI" id="CHEBI:64479"/>
        <dbReference type="ChEBI" id="CHEBI:138651"/>
        <dbReference type="EC" id="2.3.1.274"/>
    </reaction>
</comment>
<comment type="pathway">
    <text evidence="1">Lipid metabolism; phospholipid metabolism.</text>
</comment>
<comment type="subunit">
    <text evidence="1">Homodimer. Probably interacts with PlsY.</text>
</comment>
<comment type="subcellular location">
    <subcellularLocation>
        <location evidence="1">Cytoplasm</location>
    </subcellularLocation>
    <text evidence="1">Associated with the membrane possibly through PlsY.</text>
</comment>
<comment type="similarity">
    <text evidence="1">Belongs to the PlsX family.</text>
</comment>
<accession>Q2SXU8</accession>
<sequence length="368" mass="39027">MTVKLTIDCMGGDHGPSVTVPAAVKFVRSHPDAHLMLVGIESAIRAQLKKCKALDEPALSVVPAAEVVAMDDPVEVALRKKKDSSMRVALNHVKEGEAQACISAGNTGALMAVSRYVLKTLPGIERPAIAFALPNPTGYTMMLDLGANVDCEPQHLLQFAEMGHALVAALEGKERPTIGLLNIGEEVIKGNETIKRAGELLRASTLNFRGNVEGNDIYKGTVDVIVCDGFVGNVALKTSEGLAQMLADIIKEEFSRSLLSKLMALLALPVLLRFKKRVDHRQYNGAALLGLRSLVIKSHGSADAYAFEWAIKRGYDAVKNGVLERLSRAMAENAAPLGESGRDADGAGQASPSAGQPAEPSAALSSKT</sequence>
<reference key="1">
    <citation type="journal article" date="2005" name="BMC Genomics">
        <title>Bacterial genome adaptation to niches: divergence of the potential virulence genes in three Burkholderia species of different survival strategies.</title>
        <authorList>
            <person name="Kim H.S."/>
            <person name="Schell M.A."/>
            <person name="Yu Y."/>
            <person name="Ulrich R.L."/>
            <person name="Sarria S.H."/>
            <person name="Nierman W.C."/>
            <person name="DeShazer D."/>
        </authorList>
    </citation>
    <scope>NUCLEOTIDE SEQUENCE [LARGE SCALE GENOMIC DNA]</scope>
    <source>
        <strain>ATCC 700388 / DSM 13276 / CCUG 48851 / CIP 106301 / E264</strain>
    </source>
</reference>
<protein>
    <recommendedName>
        <fullName evidence="1">Phosphate acyltransferase</fullName>
        <ecNumber evidence="1">2.3.1.274</ecNumber>
    </recommendedName>
    <alternativeName>
        <fullName evidence="1">Acyl-ACP phosphotransacylase</fullName>
    </alternativeName>
    <alternativeName>
        <fullName evidence="1">Acyl-[acyl-carrier-protein]--phosphate acyltransferase</fullName>
    </alternativeName>
    <alternativeName>
        <fullName evidence="1">Phosphate-acyl-ACP acyltransferase</fullName>
    </alternativeName>
</protein>
<gene>
    <name evidence="1" type="primary">plsX</name>
    <name type="ordered locus">BTH_I1716</name>
</gene>
<proteinExistence type="inferred from homology"/>
<dbReference type="EC" id="2.3.1.274" evidence="1"/>
<dbReference type="EMBL" id="CP000086">
    <property type="protein sequence ID" value="ABC37028.1"/>
    <property type="molecule type" value="Genomic_DNA"/>
</dbReference>
<dbReference type="RefSeq" id="WP_009889987.1">
    <property type="nucleotide sequence ID" value="NZ_CP008785.1"/>
</dbReference>
<dbReference type="SMR" id="Q2SXU8"/>
<dbReference type="GeneID" id="45121445"/>
<dbReference type="KEGG" id="bte:BTH_I1716"/>
<dbReference type="HOGENOM" id="CLU_039379_1_0_4"/>
<dbReference type="UniPathway" id="UPA00085"/>
<dbReference type="Proteomes" id="UP000001930">
    <property type="component" value="Chromosome I"/>
</dbReference>
<dbReference type="GO" id="GO:0005737">
    <property type="term" value="C:cytoplasm"/>
    <property type="evidence" value="ECO:0007669"/>
    <property type="project" value="UniProtKB-SubCell"/>
</dbReference>
<dbReference type="GO" id="GO:0043811">
    <property type="term" value="F:phosphate:acyl-[acyl carrier protein] acyltransferase activity"/>
    <property type="evidence" value="ECO:0007669"/>
    <property type="project" value="UniProtKB-UniRule"/>
</dbReference>
<dbReference type="GO" id="GO:0006633">
    <property type="term" value="P:fatty acid biosynthetic process"/>
    <property type="evidence" value="ECO:0007669"/>
    <property type="project" value="UniProtKB-UniRule"/>
</dbReference>
<dbReference type="GO" id="GO:0008654">
    <property type="term" value="P:phospholipid biosynthetic process"/>
    <property type="evidence" value="ECO:0007669"/>
    <property type="project" value="UniProtKB-KW"/>
</dbReference>
<dbReference type="Gene3D" id="3.40.718.10">
    <property type="entry name" value="Isopropylmalate Dehydrogenase"/>
    <property type="match status" value="1"/>
</dbReference>
<dbReference type="HAMAP" id="MF_00019">
    <property type="entry name" value="PlsX"/>
    <property type="match status" value="1"/>
</dbReference>
<dbReference type="InterPro" id="IPR003664">
    <property type="entry name" value="FA_synthesis"/>
</dbReference>
<dbReference type="InterPro" id="IPR012281">
    <property type="entry name" value="Phospholipid_synth_PlsX-like"/>
</dbReference>
<dbReference type="NCBIfam" id="TIGR00182">
    <property type="entry name" value="plsX"/>
    <property type="match status" value="1"/>
</dbReference>
<dbReference type="PANTHER" id="PTHR30100">
    <property type="entry name" value="FATTY ACID/PHOSPHOLIPID SYNTHESIS PROTEIN PLSX"/>
    <property type="match status" value="1"/>
</dbReference>
<dbReference type="PANTHER" id="PTHR30100:SF1">
    <property type="entry name" value="PHOSPHATE ACYLTRANSFERASE"/>
    <property type="match status" value="1"/>
</dbReference>
<dbReference type="Pfam" id="PF02504">
    <property type="entry name" value="FA_synthesis"/>
    <property type="match status" value="1"/>
</dbReference>
<dbReference type="PIRSF" id="PIRSF002465">
    <property type="entry name" value="Phsphlp_syn_PlsX"/>
    <property type="match status" value="1"/>
</dbReference>
<dbReference type="SUPFAM" id="SSF53659">
    <property type="entry name" value="Isocitrate/Isopropylmalate dehydrogenase-like"/>
    <property type="match status" value="1"/>
</dbReference>
<organism>
    <name type="scientific">Burkholderia thailandensis (strain ATCC 700388 / DSM 13276 / CCUG 48851 / CIP 106301 / E264)</name>
    <dbReference type="NCBI Taxonomy" id="271848"/>
    <lineage>
        <taxon>Bacteria</taxon>
        <taxon>Pseudomonadati</taxon>
        <taxon>Pseudomonadota</taxon>
        <taxon>Betaproteobacteria</taxon>
        <taxon>Burkholderiales</taxon>
        <taxon>Burkholderiaceae</taxon>
        <taxon>Burkholderia</taxon>
        <taxon>pseudomallei group</taxon>
    </lineage>
</organism>
<keyword id="KW-0963">Cytoplasm</keyword>
<keyword id="KW-0444">Lipid biosynthesis</keyword>
<keyword id="KW-0443">Lipid metabolism</keyword>
<keyword id="KW-0594">Phospholipid biosynthesis</keyword>
<keyword id="KW-1208">Phospholipid metabolism</keyword>
<keyword id="KW-0808">Transferase</keyword>
<feature type="chain" id="PRO_1000001736" description="Phosphate acyltransferase">
    <location>
        <begin position="1"/>
        <end position="368"/>
    </location>
</feature>
<feature type="region of interest" description="Disordered" evidence="2">
    <location>
        <begin position="334"/>
        <end position="368"/>
    </location>
</feature>
<evidence type="ECO:0000255" key="1">
    <source>
        <dbReference type="HAMAP-Rule" id="MF_00019"/>
    </source>
</evidence>
<evidence type="ECO:0000256" key="2">
    <source>
        <dbReference type="SAM" id="MobiDB-lite"/>
    </source>
</evidence>
<name>PLSX_BURTA</name>